<accession>Q1NEI8</accession>
<protein>
    <recommendedName>
        <fullName evidence="1 3">L-rhamnonate dehydratase</fullName>
        <shortName evidence="1">RhamD</shortName>
        <ecNumber evidence="1 2">4.2.1.90</ecNumber>
    </recommendedName>
    <alternativeName>
        <fullName evidence="3">SpLRA3</fullName>
    </alternativeName>
</protein>
<evidence type="ECO:0000255" key="1">
    <source>
        <dbReference type="HAMAP-Rule" id="MF_01288"/>
    </source>
</evidence>
<evidence type="ECO:0000269" key="2">
    <source>
    </source>
</evidence>
<evidence type="ECO:0000303" key="3">
    <source>
    </source>
</evidence>
<evidence type="ECO:0000305" key="4">
    <source>
    </source>
</evidence>
<evidence type="ECO:0000312" key="5">
    <source>
        <dbReference type="EMBL" id="EAT09362.1"/>
    </source>
</evidence>
<gene>
    <name evidence="1" type="primary">rhmD</name>
    <name evidence="3" type="synonym">LRA3</name>
    <name evidence="5" type="ORF">SKA58_03580</name>
</gene>
<organism>
    <name type="scientific">Sphingomonas sp. (strain SKA58)</name>
    <dbReference type="NCBI Taxonomy" id="314266"/>
    <lineage>
        <taxon>Bacteria</taxon>
        <taxon>Pseudomonadati</taxon>
        <taxon>Pseudomonadota</taxon>
        <taxon>Alphaproteobacteria</taxon>
        <taxon>Sphingomonadales</taxon>
        <taxon>Sphingomonadaceae</taxon>
        <taxon>Sphingomonas</taxon>
    </lineage>
</organism>
<sequence>MPIVSLPKIKHVRAFTVRGGGADYHDQGEGHWIDDHIATPMSRYPDYRQSRQSFGINVLGTLVVEIEAEDGTVGFAVTTGGEPAAYIVEKHLARFLEGRAPTDYEKIWDQMYFSTQYYGRKGLVVNAISGVDLALWDLLGKLRQEPVYHLLGGAVRDELQFYATGARPDKAKEFGFIGGKMPLHHGPAEGVEGLKKNIAELADMRSKVGDDFWLMWDCWMALDVDYATRLAIAAHDFGLKWIEEAISPDDYWGYQQLKRNVPKGMLVTTGEHEATRWGFRMLMEMDCCDIIQPDVGWCGGVTELLKISALADAHGKMVVPHGSSVYSYHFVITRHNSPFAEFLMMHPGPTEVVPMFHPQLLGEPVPDNGRMKVSALDKPGFGVDLNPDIAMHRPYTH</sequence>
<feature type="chain" id="PRO_0000461193" description="L-rhamnonate dehydratase">
    <location>
        <begin position="1"/>
        <end position="397"/>
    </location>
</feature>
<feature type="active site" description="Proton acceptor" evidence="1">
    <location>
        <position position="321"/>
    </location>
</feature>
<feature type="binding site" evidence="1">
    <location>
        <position position="25"/>
    </location>
    <ligand>
        <name>substrate</name>
    </ligand>
</feature>
<feature type="binding site" evidence="1">
    <location>
        <position position="51"/>
    </location>
    <ligand>
        <name>substrate</name>
    </ligand>
</feature>
<feature type="binding site" evidence="1">
    <location>
        <position position="217"/>
    </location>
    <ligand>
        <name>Mg(2+)</name>
        <dbReference type="ChEBI" id="CHEBI:18420"/>
    </ligand>
</feature>
<feature type="binding site" evidence="1">
    <location>
        <position position="243"/>
    </location>
    <ligand>
        <name>Mg(2+)</name>
        <dbReference type="ChEBI" id="CHEBI:18420"/>
    </ligand>
</feature>
<feature type="binding site" evidence="1">
    <location>
        <position position="271"/>
    </location>
    <ligand>
        <name>Mg(2+)</name>
        <dbReference type="ChEBI" id="CHEBI:18420"/>
    </ligand>
</feature>
<feature type="binding site" evidence="1">
    <location>
        <position position="341"/>
    </location>
    <ligand>
        <name>substrate</name>
    </ligand>
</feature>
<feature type="site" description="Increases basicity of active site His" evidence="1">
    <location>
        <position position="294"/>
    </location>
</feature>
<feature type="site" description="Transition state stabilizer" evidence="1">
    <location>
        <position position="341"/>
    </location>
</feature>
<dbReference type="EC" id="4.2.1.90" evidence="1 2"/>
<dbReference type="EMBL" id="AAQG01000004">
    <property type="protein sequence ID" value="EAT09362.1"/>
    <property type="molecule type" value="Genomic_DNA"/>
</dbReference>
<dbReference type="SMR" id="Q1NEI8"/>
<dbReference type="STRING" id="314266.SKA58_03580"/>
<dbReference type="eggNOG" id="COG4948">
    <property type="taxonomic scope" value="Bacteria"/>
</dbReference>
<dbReference type="HOGENOM" id="CLU_030273_1_0_5"/>
<dbReference type="BioCyc" id="MetaCyc:MONOMER-16232"/>
<dbReference type="BRENDA" id="4.2.1.90">
    <property type="organism ID" value="5801"/>
</dbReference>
<dbReference type="UniPathway" id="UPA00541"/>
<dbReference type="Proteomes" id="UP000005395">
    <property type="component" value="Unassembled WGS sequence"/>
</dbReference>
<dbReference type="GO" id="GO:0050032">
    <property type="term" value="F:L-rhamnonate dehydratase activity"/>
    <property type="evidence" value="ECO:0007669"/>
    <property type="project" value="UniProtKB-UniRule"/>
</dbReference>
<dbReference type="GO" id="GO:0000287">
    <property type="term" value="F:magnesium ion binding"/>
    <property type="evidence" value="ECO:0007669"/>
    <property type="project" value="UniProtKB-UniRule"/>
</dbReference>
<dbReference type="GO" id="GO:0009063">
    <property type="term" value="P:amino acid catabolic process"/>
    <property type="evidence" value="ECO:0007669"/>
    <property type="project" value="InterPro"/>
</dbReference>
<dbReference type="GO" id="GO:0016052">
    <property type="term" value="P:carbohydrate catabolic process"/>
    <property type="evidence" value="ECO:0007669"/>
    <property type="project" value="TreeGrafter"/>
</dbReference>
<dbReference type="GO" id="GO:0019299">
    <property type="term" value="P:rhamnose metabolic process"/>
    <property type="evidence" value="ECO:0007669"/>
    <property type="project" value="UniProtKB-KW"/>
</dbReference>
<dbReference type="FunFam" id="3.20.20.120:FF:000005">
    <property type="entry name" value="Putative L-rhamnonate dehydratase"/>
    <property type="match status" value="1"/>
</dbReference>
<dbReference type="Gene3D" id="3.20.20.120">
    <property type="entry name" value="Enolase-like C-terminal domain"/>
    <property type="match status" value="1"/>
</dbReference>
<dbReference type="Gene3D" id="3.30.390.10">
    <property type="entry name" value="Enolase-like, N-terminal domain"/>
    <property type="match status" value="1"/>
</dbReference>
<dbReference type="HAMAP" id="MF_01288">
    <property type="entry name" value="Rhamnon_dehydrat"/>
    <property type="match status" value="1"/>
</dbReference>
<dbReference type="InterPro" id="IPR036849">
    <property type="entry name" value="Enolase-like_C_sf"/>
</dbReference>
<dbReference type="InterPro" id="IPR029017">
    <property type="entry name" value="Enolase-like_N"/>
</dbReference>
<dbReference type="InterPro" id="IPR029065">
    <property type="entry name" value="Enolase_C-like"/>
</dbReference>
<dbReference type="InterPro" id="IPR023444">
    <property type="entry name" value="L-Rhamnon_dehydrat"/>
</dbReference>
<dbReference type="InterPro" id="IPR018110">
    <property type="entry name" value="Mandel_Rmase/mucon_lact_enz_CS"/>
</dbReference>
<dbReference type="InterPro" id="IPR013342">
    <property type="entry name" value="Mandelate_racemase_C"/>
</dbReference>
<dbReference type="InterPro" id="IPR013341">
    <property type="entry name" value="Mandelate_racemase_N_dom"/>
</dbReference>
<dbReference type="InterPro" id="IPR046945">
    <property type="entry name" value="RHMD-like"/>
</dbReference>
<dbReference type="NCBIfam" id="NF011968">
    <property type="entry name" value="PRK15440.1"/>
    <property type="match status" value="1"/>
</dbReference>
<dbReference type="PANTHER" id="PTHR13794">
    <property type="entry name" value="ENOLASE SUPERFAMILY, MANDELATE RACEMASE"/>
    <property type="match status" value="1"/>
</dbReference>
<dbReference type="PANTHER" id="PTHR13794:SF58">
    <property type="entry name" value="MITOCHONDRIAL ENOLASE SUPERFAMILY MEMBER 1"/>
    <property type="match status" value="1"/>
</dbReference>
<dbReference type="Pfam" id="PF13378">
    <property type="entry name" value="MR_MLE_C"/>
    <property type="match status" value="1"/>
</dbReference>
<dbReference type="Pfam" id="PF02746">
    <property type="entry name" value="MR_MLE_N"/>
    <property type="match status" value="1"/>
</dbReference>
<dbReference type="SFLD" id="SFLDG00179">
    <property type="entry name" value="mandelate_racemase"/>
    <property type="match status" value="1"/>
</dbReference>
<dbReference type="SFLD" id="SFLDF00006">
    <property type="entry name" value="rhamnonate_dehydratase"/>
    <property type="match status" value="1"/>
</dbReference>
<dbReference type="SMART" id="SM00922">
    <property type="entry name" value="MR_MLE"/>
    <property type="match status" value="1"/>
</dbReference>
<dbReference type="SUPFAM" id="SSF51604">
    <property type="entry name" value="Enolase C-terminal domain-like"/>
    <property type="match status" value="1"/>
</dbReference>
<dbReference type="SUPFAM" id="SSF54826">
    <property type="entry name" value="Enolase N-terminal domain-like"/>
    <property type="match status" value="1"/>
</dbReference>
<dbReference type="PROSITE" id="PS00908">
    <property type="entry name" value="MR_MLE_1"/>
    <property type="match status" value="1"/>
</dbReference>
<proteinExistence type="evidence at protein level"/>
<comment type="function">
    <text evidence="2">Catalyzes the dehydration of L-rhamnonate to 2-keto-3-deoxy-L-rhamnonate (KDR) (PubMed:19187228). Also shows activity with L-lyxonate and L-mannonate, with much lower catalytic efficiency (PubMed:19187228). Catalyzes the third step in an alternative pathway for rhamnose utilization that does not involve phosphorylated intermediates (PubMed:19187228).</text>
</comment>
<comment type="catalytic activity">
    <reaction evidence="1 2">
        <text>L-rhamnonate = 2-dehydro-3-deoxy-L-rhamnonate + H2O</text>
        <dbReference type="Rhea" id="RHEA:23080"/>
        <dbReference type="ChEBI" id="CHEBI:15377"/>
        <dbReference type="ChEBI" id="CHEBI:58118"/>
        <dbReference type="ChEBI" id="CHEBI:58371"/>
        <dbReference type="EC" id="4.2.1.90"/>
    </reaction>
    <physiologicalReaction direction="left-to-right" evidence="2">
        <dbReference type="Rhea" id="RHEA:23081"/>
    </physiologicalReaction>
</comment>
<comment type="cofactor">
    <cofactor evidence="1">
        <name>Mg(2+)</name>
        <dbReference type="ChEBI" id="CHEBI:18420"/>
    </cofactor>
    <text evidence="1">Binds 1 Mg(2+) ion per subunit.</text>
</comment>
<comment type="biophysicochemical properties">
    <kinetics>
        <KM evidence="2">0.121 mM for L-rhamnonate</KM>
        <KM evidence="2">1.64 mM for L-lyxonate</KM>
        <KM evidence="2">3.66 mM for L-mannonate</KM>
        <text evidence="2">kcat is 21.3 min(-1) with L-rhamnonate as substrate (PubMed:19187228). kcat is 11.0 min(-1) with L-lyxonate as substrate (PubMed:19187228). kcat is 10.8 min(-1) with L-mannonate as substrate (PubMed:19187228).</text>
    </kinetics>
</comment>
<comment type="pathway">
    <text evidence="4">Carbohydrate degradation; L-rhamnose degradation.</text>
</comment>
<comment type="subunit">
    <text evidence="1">Homooctamer; tetramer of dimers.</text>
</comment>
<comment type="miscellaneous">
    <text evidence="1">Reaction proceeds via a syn dehydration.</text>
</comment>
<comment type="similarity">
    <text evidence="1">Belongs to the mandelate racemase/muconate lactonizing enzyme family. RhamD subfamily.</text>
</comment>
<reference key="1">
    <citation type="submission" date="2006-03" db="EMBL/GenBank/DDBJ databases">
        <authorList>
            <person name="Hagstrom A."/>
            <person name="Ferriera S."/>
            <person name="Johnson J."/>
            <person name="Kravitz S."/>
            <person name="Halpern A."/>
            <person name="Remington K."/>
            <person name="Beeson K."/>
            <person name="Tran B."/>
            <person name="Rogers Y.-H."/>
            <person name="Friedman R."/>
            <person name="Venter J.C."/>
        </authorList>
    </citation>
    <scope>NUCLEOTIDE SEQUENCE [LARGE SCALE GENOMIC DNA]</scope>
    <source>
        <strain>SKA58</strain>
    </source>
</reference>
<reference key="2">
    <citation type="journal article" date="2009" name="FEBS J.">
        <title>Novel modified version of nonphosphorylated sugar metabolism--an alternative L-rhamnose pathway of Sphingomonas sp.</title>
        <authorList>
            <person name="Watanabe S."/>
            <person name="Makino K."/>
        </authorList>
    </citation>
    <scope>FUNCTION</scope>
    <scope>CATALYTIC ACTIVITY</scope>
    <scope>BIOPHYSICOCHEMICAL PROPERTIES</scope>
    <scope>PATHWAY</scope>
    <source>
        <strain>NBRC 101715</strain>
    </source>
</reference>
<keyword id="KW-0456">Lyase</keyword>
<keyword id="KW-0460">Magnesium</keyword>
<keyword id="KW-0479">Metal-binding</keyword>
<keyword id="KW-1185">Reference proteome</keyword>
<keyword id="KW-0684">Rhamnose metabolism</keyword>
<name>RHMD_SPHSS</name>